<reference key="1">
    <citation type="submission" date="2007-08" db="EMBL/GenBank/DDBJ databases">
        <authorList>
            <consortium name="The Vibrio harveyi Genome Sequencing Project"/>
            <person name="Bassler B."/>
            <person name="Clifton S.W."/>
            <person name="Fulton L."/>
            <person name="Delehaunty K."/>
            <person name="Fronick C."/>
            <person name="Harrison M."/>
            <person name="Markivic C."/>
            <person name="Fulton R."/>
            <person name="Tin-Wollam A.-M."/>
            <person name="Shah N."/>
            <person name="Pepin K."/>
            <person name="Nash W."/>
            <person name="Thiruvilangam P."/>
            <person name="Bhonagiri V."/>
            <person name="Waters C."/>
            <person name="Tu K.C."/>
            <person name="Irgon J."/>
            <person name="Wilson R.K."/>
        </authorList>
    </citation>
    <scope>NUCLEOTIDE SEQUENCE [LARGE SCALE GENOMIC DNA]</scope>
    <source>
        <strain>ATCC BAA-1116 / BB120</strain>
    </source>
</reference>
<gene>
    <name evidence="1" type="primary">rpoC</name>
    <name type="ordered locus">VIBHAR_00224</name>
</gene>
<organism>
    <name type="scientific">Vibrio campbellii (strain ATCC BAA-1116)</name>
    <dbReference type="NCBI Taxonomy" id="2902295"/>
    <lineage>
        <taxon>Bacteria</taxon>
        <taxon>Pseudomonadati</taxon>
        <taxon>Pseudomonadota</taxon>
        <taxon>Gammaproteobacteria</taxon>
        <taxon>Vibrionales</taxon>
        <taxon>Vibrionaceae</taxon>
        <taxon>Vibrio</taxon>
    </lineage>
</organism>
<sequence>MKDLLNFLKAQHKTEEFDAIKIGLSSPDMIRSWSFGEVKKPETINYRTFKPERDGLFCARIFGPVKDYECLCGKYKRLKHRGVICEKCGVEVTQTKVRRDRMGHIELASPVAHIWFLKSLPSRIGLLMDIPLRDIERVLYFEMYVVTEPGMTDLEKSQMLTEEEYLDRLEEWGDEFTAKMGAEAIKDLLGSMDMHAEAEQMREELETTNSETKRKKVTKRLKLVEAFIQSGNNPEWMILTVLPVLPPDLRPLVPLDGGRFATSDLNDLYRRVINRNNRLKRLLELAAPDIIVRNEKRMLQESVDALLDNGRRGRAITGSNKRPLKSLADMIKGKQGRFRQNLLGKRVDYSGRSVITVGPYLRLHQCGLPKKMALELFKPFIYSKLETRGLATTIKAAKKMVEREEAVVWDILDEVIREHPVLLNRAPTLHRLGIQAFEPVLIEGKAIQLHPLVCAAYNADFDGDQMAVHVPLTLEAQLEARTLMMSTNNILSPASGDPIIVPSQDVVLGLYYMTRDKINVKGEGMYLSGPAEAEKAYRTKQAELHARVKVRITETVVDEDGNSTTETKMVDTTIGRAMLWQIVPAGLPYSIVNQKLGKKQISNLLNEAYRKLGLKDTVIFADQIMYTGFAYAALSGVSVGIDDMVVPPAKYTEIAEAEEEVREIQEQYQSGLVTAGERYNKVIDIWASTNDRVAKAMMANLSSETVVNRDGEEEQQESFNSIYMMADSGARGSAAQIRQLAGMRGLMARPDGSIIETPITANFKEGLNVLQYFISTHGARKGLADTALKTANSGYLTRRLVDVAQDVVVTEHDCGTHEGVDMMPHIEGGDVKVALTELALGRVVAEDVLKPGTEDVLIPRNTLIDEKWCQIMEENSVDSMKVRSVVTCDSDFGCCAQCYGRDLARGHLVNQGEAVGVIAAQSIGEPGTQLTMRTFHIGGAASTAAAENSIQAKTTGTVKLHNAKFVVNKDKKLVITSRASELTIIDEFGRTKEKHKLPYGSMLSKGDNDAVTAGEVVANWEAHTMPIITEVAGRIQFVDMIDGVTVSRQTDDLTGLSSSEVTDPAARPAAGKDMRPAIKLVDEQGNDVMIPGTEMPAHYFLPGKAIVNIEDGAEVGIGDTLSRIPQKSGGNKDITGGLPRVADLFEARKPKEPAILAEHTGTVSFGKETKGKRRLVITRDSGVTYEEMIPKHRQLNVFEGERVERGDVIADGPESPHDILRLRGVHAVTQYIANEVQEVYRLQGVKINDKHIETIVRQMLRKCTITHAGDSEFLPGEQVEYSQVKIANRNLEAEGKEPARFERELLGITKASLATESFISAASFQETTRVLTEAAVSGKRDDLRGLKENVIVGRLIPAGTGFAYHQDRQAKRAEAQEGPSAEQATDNLAALLNAGFSSDE</sequence>
<comment type="function">
    <text evidence="1">DNA-dependent RNA polymerase catalyzes the transcription of DNA into RNA using the four ribonucleoside triphosphates as substrates.</text>
</comment>
<comment type="catalytic activity">
    <reaction evidence="1">
        <text>RNA(n) + a ribonucleoside 5'-triphosphate = RNA(n+1) + diphosphate</text>
        <dbReference type="Rhea" id="RHEA:21248"/>
        <dbReference type="Rhea" id="RHEA-COMP:14527"/>
        <dbReference type="Rhea" id="RHEA-COMP:17342"/>
        <dbReference type="ChEBI" id="CHEBI:33019"/>
        <dbReference type="ChEBI" id="CHEBI:61557"/>
        <dbReference type="ChEBI" id="CHEBI:140395"/>
        <dbReference type="EC" id="2.7.7.6"/>
    </reaction>
</comment>
<comment type="cofactor">
    <cofactor evidence="1">
        <name>Mg(2+)</name>
        <dbReference type="ChEBI" id="CHEBI:18420"/>
    </cofactor>
    <text evidence="1">Binds 1 Mg(2+) ion per subunit.</text>
</comment>
<comment type="cofactor">
    <cofactor evidence="1">
        <name>Zn(2+)</name>
        <dbReference type="ChEBI" id="CHEBI:29105"/>
    </cofactor>
    <text evidence="1">Binds 2 Zn(2+) ions per subunit.</text>
</comment>
<comment type="subunit">
    <text evidence="1">The RNAP catalytic core consists of 2 alpha, 1 beta, 1 beta' and 1 omega subunit. When a sigma factor is associated with the core the holoenzyme is formed, which can initiate transcription.</text>
</comment>
<comment type="similarity">
    <text evidence="1">Belongs to the RNA polymerase beta' chain family.</text>
</comment>
<feature type="chain" id="PRO_0000353457" description="DNA-directed RNA polymerase subunit beta'">
    <location>
        <begin position="1"/>
        <end position="1400"/>
    </location>
</feature>
<feature type="region of interest" description="Disordered" evidence="2">
    <location>
        <begin position="1367"/>
        <end position="1400"/>
    </location>
</feature>
<feature type="binding site" evidence="1">
    <location>
        <position position="70"/>
    </location>
    <ligand>
        <name>Zn(2+)</name>
        <dbReference type="ChEBI" id="CHEBI:29105"/>
        <label>1</label>
    </ligand>
</feature>
<feature type="binding site" evidence="1">
    <location>
        <position position="72"/>
    </location>
    <ligand>
        <name>Zn(2+)</name>
        <dbReference type="ChEBI" id="CHEBI:29105"/>
        <label>1</label>
    </ligand>
</feature>
<feature type="binding site" evidence="1">
    <location>
        <position position="85"/>
    </location>
    <ligand>
        <name>Zn(2+)</name>
        <dbReference type="ChEBI" id="CHEBI:29105"/>
        <label>1</label>
    </ligand>
</feature>
<feature type="binding site" evidence="1">
    <location>
        <position position="88"/>
    </location>
    <ligand>
        <name>Zn(2+)</name>
        <dbReference type="ChEBI" id="CHEBI:29105"/>
        <label>1</label>
    </ligand>
</feature>
<feature type="binding site" evidence="1">
    <location>
        <position position="460"/>
    </location>
    <ligand>
        <name>Mg(2+)</name>
        <dbReference type="ChEBI" id="CHEBI:18420"/>
    </ligand>
</feature>
<feature type="binding site" evidence="1">
    <location>
        <position position="462"/>
    </location>
    <ligand>
        <name>Mg(2+)</name>
        <dbReference type="ChEBI" id="CHEBI:18420"/>
    </ligand>
</feature>
<feature type="binding site" evidence="1">
    <location>
        <position position="464"/>
    </location>
    <ligand>
        <name>Mg(2+)</name>
        <dbReference type="ChEBI" id="CHEBI:18420"/>
    </ligand>
</feature>
<feature type="binding site" evidence="1">
    <location>
        <position position="814"/>
    </location>
    <ligand>
        <name>Zn(2+)</name>
        <dbReference type="ChEBI" id="CHEBI:29105"/>
        <label>2</label>
    </ligand>
</feature>
<feature type="binding site" evidence="1">
    <location>
        <position position="888"/>
    </location>
    <ligand>
        <name>Zn(2+)</name>
        <dbReference type="ChEBI" id="CHEBI:29105"/>
        <label>2</label>
    </ligand>
</feature>
<feature type="binding site" evidence="1">
    <location>
        <position position="895"/>
    </location>
    <ligand>
        <name>Zn(2+)</name>
        <dbReference type="ChEBI" id="CHEBI:29105"/>
        <label>2</label>
    </ligand>
</feature>
<feature type="binding site" evidence="1">
    <location>
        <position position="898"/>
    </location>
    <ligand>
        <name>Zn(2+)</name>
        <dbReference type="ChEBI" id="CHEBI:29105"/>
        <label>2</label>
    </ligand>
</feature>
<protein>
    <recommendedName>
        <fullName evidence="1">DNA-directed RNA polymerase subunit beta'</fullName>
        <shortName evidence="1">RNAP subunit beta'</shortName>
        <ecNumber evidence="1">2.7.7.6</ecNumber>
    </recommendedName>
    <alternativeName>
        <fullName evidence="1">RNA polymerase subunit beta'</fullName>
    </alternativeName>
    <alternativeName>
        <fullName evidence="1">Transcriptase subunit beta'</fullName>
    </alternativeName>
</protein>
<name>RPOC_VIBC1</name>
<keyword id="KW-0240">DNA-directed RNA polymerase</keyword>
<keyword id="KW-0460">Magnesium</keyword>
<keyword id="KW-0479">Metal-binding</keyword>
<keyword id="KW-0548">Nucleotidyltransferase</keyword>
<keyword id="KW-0804">Transcription</keyword>
<keyword id="KW-0808">Transferase</keyword>
<keyword id="KW-0862">Zinc</keyword>
<evidence type="ECO:0000255" key="1">
    <source>
        <dbReference type="HAMAP-Rule" id="MF_01322"/>
    </source>
</evidence>
<evidence type="ECO:0000256" key="2">
    <source>
        <dbReference type="SAM" id="MobiDB-lite"/>
    </source>
</evidence>
<dbReference type="EC" id="2.7.7.6" evidence="1"/>
<dbReference type="EMBL" id="CP000789">
    <property type="protein sequence ID" value="ABU69264.1"/>
    <property type="molecule type" value="Genomic_DNA"/>
</dbReference>
<dbReference type="RefSeq" id="WP_012126546.1">
    <property type="nucleotide sequence ID" value="NC_009783.1"/>
</dbReference>
<dbReference type="SMR" id="A7MXF0"/>
<dbReference type="KEGG" id="vha:VIBHAR_00224"/>
<dbReference type="PATRIC" id="fig|338187.25.peg.2327"/>
<dbReference type="Proteomes" id="UP000008152">
    <property type="component" value="Chromosome I"/>
</dbReference>
<dbReference type="GO" id="GO:0000428">
    <property type="term" value="C:DNA-directed RNA polymerase complex"/>
    <property type="evidence" value="ECO:0007669"/>
    <property type="project" value="UniProtKB-KW"/>
</dbReference>
<dbReference type="GO" id="GO:0003677">
    <property type="term" value="F:DNA binding"/>
    <property type="evidence" value="ECO:0007669"/>
    <property type="project" value="UniProtKB-UniRule"/>
</dbReference>
<dbReference type="GO" id="GO:0003899">
    <property type="term" value="F:DNA-directed RNA polymerase activity"/>
    <property type="evidence" value="ECO:0007669"/>
    <property type="project" value="UniProtKB-UniRule"/>
</dbReference>
<dbReference type="GO" id="GO:0000287">
    <property type="term" value="F:magnesium ion binding"/>
    <property type="evidence" value="ECO:0007669"/>
    <property type="project" value="UniProtKB-UniRule"/>
</dbReference>
<dbReference type="GO" id="GO:0008270">
    <property type="term" value="F:zinc ion binding"/>
    <property type="evidence" value="ECO:0007669"/>
    <property type="project" value="UniProtKB-UniRule"/>
</dbReference>
<dbReference type="GO" id="GO:0006351">
    <property type="term" value="P:DNA-templated transcription"/>
    <property type="evidence" value="ECO:0007669"/>
    <property type="project" value="UniProtKB-UniRule"/>
</dbReference>
<dbReference type="CDD" id="cd02655">
    <property type="entry name" value="RNAP_beta'_C"/>
    <property type="match status" value="1"/>
</dbReference>
<dbReference type="CDD" id="cd01609">
    <property type="entry name" value="RNAP_beta'_N"/>
    <property type="match status" value="1"/>
</dbReference>
<dbReference type="FunFam" id="1.10.132.30:FF:000003">
    <property type="entry name" value="DNA-directed RNA polymerase subunit beta"/>
    <property type="match status" value="1"/>
</dbReference>
<dbReference type="FunFam" id="1.10.150.390:FF:000002">
    <property type="entry name" value="DNA-directed RNA polymerase subunit beta"/>
    <property type="match status" value="1"/>
</dbReference>
<dbReference type="FunFam" id="1.10.40.90:FF:000001">
    <property type="entry name" value="DNA-directed RNA polymerase subunit beta"/>
    <property type="match status" value="1"/>
</dbReference>
<dbReference type="FunFam" id="4.10.860.120:FF:000001">
    <property type="entry name" value="DNA-directed RNA polymerase subunit beta"/>
    <property type="match status" value="1"/>
</dbReference>
<dbReference type="Gene3D" id="1.10.132.30">
    <property type="match status" value="1"/>
</dbReference>
<dbReference type="Gene3D" id="1.10.150.390">
    <property type="match status" value="1"/>
</dbReference>
<dbReference type="Gene3D" id="1.10.1790.20">
    <property type="match status" value="1"/>
</dbReference>
<dbReference type="Gene3D" id="1.10.40.90">
    <property type="match status" value="1"/>
</dbReference>
<dbReference type="Gene3D" id="2.40.40.20">
    <property type="match status" value="1"/>
</dbReference>
<dbReference type="Gene3D" id="2.40.50.100">
    <property type="match status" value="3"/>
</dbReference>
<dbReference type="Gene3D" id="4.10.860.120">
    <property type="entry name" value="RNA polymerase II, clamp domain"/>
    <property type="match status" value="1"/>
</dbReference>
<dbReference type="Gene3D" id="1.10.274.100">
    <property type="entry name" value="RNA polymerase Rpb1, domain 3"/>
    <property type="match status" value="1"/>
</dbReference>
<dbReference type="HAMAP" id="MF_01322">
    <property type="entry name" value="RNApol_bact_RpoC"/>
    <property type="match status" value="1"/>
</dbReference>
<dbReference type="InterPro" id="IPR045867">
    <property type="entry name" value="DNA-dir_RpoC_beta_prime"/>
</dbReference>
<dbReference type="InterPro" id="IPR012754">
    <property type="entry name" value="DNA-dir_RpoC_beta_prime_bact"/>
</dbReference>
<dbReference type="InterPro" id="IPR000722">
    <property type="entry name" value="RNA_pol_asu"/>
</dbReference>
<dbReference type="InterPro" id="IPR006592">
    <property type="entry name" value="RNA_pol_N"/>
</dbReference>
<dbReference type="InterPro" id="IPR007080">
    <property type="entry name" value="RNA_pol_Rpb1_1"/>
</dbReference>
<dbReference type="InterPro" id="IPR007066">
    <property type="entry name" value="RNA_pol_Rpb1_3"/>
</dbReference>
<dbReference type="InterPro" id="IPR042102">
    <property type="entry name" value="RNA_pol_Rpb1_3_sf"/>
</dbReference>
<dbReference type="InterPro" id="IPR007083">
    <property type="entry name" value="RNA_pol_Rpb1_4"/>
</dbReference>
<dbReference type="InterPro" id="IPR007081">
    <property type="entry name" value="RNA_pol_Rpb1_5"/>
</dbReference>
<dbReference type="InterPro" id="IPR044893">
    <property type="entry name" value="RNA_pol_Rpb1_clamp_domain"/>
</dbReference>
<dbReference type="InterPro" id="IPR038120">
    <property type="entry name" value="Rpb1_funnel_sf"/>
</dbReference>
<dbReference type="NCBIfam" id="TIGR02386">
    <property type="entry name" value="rpoC_TIGR"/>
    <property type="match status" value="1"/>
</dbReference>
<dbReference type="PANTHER" id="PTHR19376">
    <property type="entry name" value="DNA-DIRECTED RNA POLYMERASE"/>
    <property type="match status" value="1"/>
</dbReference>
<dbReference type="PANTHER" id="PTHR19376:SF54">
    <property type="entry name" value="DNA-DIRECTED RNA POLYMERASE SUBUNIT BETA"/>
    <property type="match status" value="1"/>
</dbReference>
<dbReference type="Pfam" id="PF04997">
    <property type="entry name" value="RNA_pol_Rpb1_1"/>
    <property type="match status" value="1"/>
</dbReference>
<dbReference type="Pfam" id="PF00623">
    <property type="entry name" value="RNA_pol_Rpb1_2"/>
    <property type="match status" value="2"/>
</dbReference>
<dbReference type="Pfam" id="PF04983">
    <property type="entry name" value="RNA_pol_Rpb1_3"/>
    <property type="match status" value="1"/>
</dbReference>
<dbReference type="Pfam" id="PF05000">
    <property type="entry name" value="RNA_pol_Rpb1_4"/>
    <property type="match status" value="1"/>
</dbReference>
<dbReference type="Pfam" id="PF04998">
    <property type="entry name" value="RNA_pol_Rpb1_5"/>
    <property type="match status" value="1"/>
</dbReference>
<dbReference type="SMART" id="SM00663">
    <property type="entry name" value="RPOLA_N"/>
    <property type="match status" value="1"/>
</dbReference>
<dbReference type="SUPFAM" id="SSF64484">
    <property type="entry name" value="beta and beta-prime subunits of DNA dependent RNA-polymerase"/>
    <property type="match status" value="1"/>
</dbReference>
<proteinExistence type="inferred from homology"/>
<accession>A7MXF0</accession>